<feature type="chain" id="PRO_1000136227" description="Protein PsiE homolog">
    <location>
        <begin position="1"/>
        <end position="135"/>
    </location>
</feature>
<feature type="transmembrane region" description="Helical" evidence="1">
    <location>
        <begin position="20"/>
        <end position="40"/>
    </location>
</feature>
<feature type="transmembrane region" description="Helical" evidence="1">
    <location>
        <begin position="54"/>
        <end position="74"/>
    </location>
</feature>
<feature type="transmembrane region" description="Helical" evidence="1">
    <location>
        <begin position="82"/>
        <end position="102"/>
    </location>
</feature>
<feature type="transmembrane region" description="Helical" evidence="1">
    <location>
        <begin position="107"/>
        <end position="127"/>
    </location>
</feature>
<proteinExistence type="inferred from homology"/>
<gene>
    <name evidence="1" type="primary">psiE</name>
    <name type="ordered locus">YPK_0375</name>
</gene>
<comment type="subcellular location">
    <subcellularLocation>
        <location evidence="1">Cell inner membrane</location>
        <topology evidence="1">Multi-pass membrane protein</topology>
    </subcellularLocation>
</comment>
<comment type="similarity">
    <text evidence="1">Belongs to the PsiE family.</text>
</comment>
<reference key="1">
    <citation type="submission" date="2008-02" db="EMBL/GenBank/DDBJ databases">
        <title>Complete sequence of Yersinia pseudotuberculosis YPIII.</title>
        <authorList>
            <consortium name="US DOE Joint Genome Institute"/>
            <person name="Copeland A."/>
            <person name="Lucas S."/>
            <person name="Lapidus A."/>
            <person name="Glavina del Rio T."/>
            <person name="Dalin E."/>
            <person name="Tice H."/>
            <person name="Bruce D."/>
            <person name="Goodwin L."/>
            <person name="Pitluck S."/>
            <person name="Munk A.C."/>
            <person name="Brettin T."/>
            <person name="Detter J.C."/>
            <person name="Han C."/>
            <person name="Tapia R."/>
            <person name="Schmutz J."/>
            <person name="Larimer F."/>
            <person name="Land M."/>
            <person name="Hauser L."/>
            <person name="Challacombe J.F."/>
            <person name="Green L."/>
            <person name="Lindler L.E."/>
            <person name="Nikolich M.P."/>
            <person name="Richardson P."/>
        </authorList>
    </citation>
    <scope>NUCLEOTIDE SEQUENCE [LARGE SCALE GENOMIC DNA]</scope>
    <source>
        <strain>YPIII</strain>
    </source>
</reference>
<keyword id="KW-0997">Cell inner membrane</keyword>
<keyword id="KW-1003">Cell membrane</keyword>
<keyword id="KW-0472">Membrane</keyword>
<keyword id="KW-0812">Transmembrane</keyword>
<keyword id="KW-1133">Transmembrane helix</keyword>
<dbReference type="EMBL" id="CP000950">
    <property type="protein sequence ID" value="ACA66680.1"/>
    <property type="molecule type" value="Genomic_DNA"/>
</dbReference>
<dbReference type="RefSeq" id="WP_002212086.1">
    <property type="nucleotide sequence ID" value="NZ_CP009792.1"/>
</dbReference>
<dbReference type="SMR" id="B1JJM9"/>
<dbReference type="GeneID" id="96663139"/>
<dbReference type="KEGG" id="ypy:YPK_0375"/>
<dbReference type="PATRIC" id="fig|502800.11.peg.977"/>
<dbReference type="GO" id="GO:0005886">
    <property type="term" value="C:plasma membrane"/>
    <property type="evidence" value="ECO:0007669"/>
    <property type="project" value="UniProtKB-SubCell"/>
</dbReference>
<dbReference type="GO" id="GO:0016036">
    <property type="term" value="P:cellular response to phosphate starvation"/>
    <property type="evidence" value="ECO:0007669"/>
    <property type="project" value="InterPro"/>
</dbReference>
<dbReference type="HAMAP" id="MF_01048">
    <property type="entry name" value="PsiE"/>
    <property type="match status" value="1"/>
</dbReference>
<dbReference type="InterPro" id="IPR009315">
    <property type="entry name" value="P_starv_induced_PsiE"/>
</dbReference>
<dbReference type="InterPro" id="IPR020948">
    <property type="entry name" value="P_starv_induced_PsiE-like"/>
</dbReference>
<dbReference type="NCBIfam" id="NF002764">
    <property type="entry name" value="PRK02833.1-2"/>
    <property type="match status" value="1"/>
</dbReference>
<dbReference type="NCBIfam" id="NF002765">
    <property type="entry name" value="PRK02833.1-3"/>
    <property type="match status" value="1"/>
</dbReference>
<dbReference type="PANTHER" id="PTHR37819">
    <property type="entry name" value="PROTEIN PSIE"/>
    <property type="match status" value="1"/>
</dbReference>
<dbReference type="PANTHER" id="PTHR37819:SF1">
    <property type="entry name" value="PROTEIN PSIE"/>
    <property type="match status" value="1"/>
</dbReference>
<dbReference type="Pfam" id="PF06146">
    <property type="entry name" value="PsiE"/>
    <property type="match status" value="1"/>
</dbReference>
<dbReference type="PIRSF" id="PIRSF029598">
    <property type="entry name" value="PsiE"/>
    <property type="match status" value="1"/>
</dbReference>
<evidence type="ECO:0000255" key="1">
    <source>
        <dbReference type="HAMAP-Rule" id="MF_01048"/>
    </source>
</evidence>
<accession>B1JJM9</accession>
<sequence>MAKNSRSQWIAKNLQRLLNVGLIMLAAILVVFLVKETIHLGKVLFLSNQETSSYMLIEGIVIYFLYFEFIALIVKYFESGYHFPLRYFIYIGITAIIRLIIVDHENPIDTLIYSGSILVLVVTLYLANTERLKRE</sequence>
<organism>
    <name type="scientific">Yersinia pseudotuberculosis serotype O:3 (strain YPIII)</name>
    <dbReference type="NCBI Taxonomy" id="502800"/>
    <lineage>
        <taxon>Bacteria</taxon>
        <taxon>Pseudomonadati</taxon>
        <taxon>Pseudomonadota</taxon>
        <taxon>Gammaproteobacteria</taxon>
        <taxon>Enterobacterales</taxon>
        <taxon>Yersiniaceae</taxon>
        <taxon>Yersinia</taxon>
    </lineage>
</organism>
<name>PSIE_YERPY</name>
<protein>
    <recommendedName>
        <fullName evidence="1">Protein PsiE homolog</fullName>
    </recommendedName>
</protein>